<keyword id="KW-1185">Reference proteome</keyword>
<name>Y1569_HAEIN</name>
<dbReference type="EMBL" id="L42023">
    <property type="protein sequence ID" value="AAC23223.1"/>
    <property type="molecule type" value="Genomic_DNA"/>
</dbReference>
<dbReference type="PIR" id="G64036">
    <property type="entry name" value="G64036"/>
</dbReference>
<dbReference type="SMR" id="P44258"/>
<dbReference type="STRING" id="71421.HI_1569"/>
<dbReference type="EnsemblBacteria" id="AAC23223">
    <property type="protein sequence ID" value="AAC23223"/>
    <property type="gene ID" value="HI_1569"/>
</dbReference>
<dbReference type="KEGG" id="hin:HI_1569"/>
<dbReference type="HOGENOM" id="CLU_3118410_0_0_6"/>
<dbReference type="Proteomes" id="UP000000579">
    <property type="component" value="Chromosome"/>
</dbReference>
<reference key="1">
    <citation type="journal article" date="1995" name="Science">
        <title>Whole-genome random sequencing and assembly of Haemophilus influenzae Rd.</title>
        <authorList>
            <person name="Fleischmann R.D."/>
            <person name="Adams M.D."/>
            <person name="White O."/>
            <person name="Clayton R.A."/>
            <person name="Kirkness E.F."/>
            <person name="Kerlavage A.R."/>
            <person name="Bult C.J."/>
            <person name="Tomb J.-F."/>
            <person name="Dougherty B.A."/>
            <person name="Merrick J.M."/>
            <person name="McKenney K."/>
            <person name="Sutton G.G."/>
            <person name="FitzHugh W."/>
            <person name="Fields C.A."/>
            <person name="Gocayne J.D."/>
            <person name="Scott J.D."/>
            <person name="Shirley R."/>
            <person name="Liu L.-I."/>
            <person name="Glodek A."/>
            <person name="Kelley J.M."/>
            <person name="Weidman J.F."/>
            <person name="Phillips C.A."/>
            <person name="Spriggs T."/>
            <person name="Hedblom E."/>
            <person name="Cotton M.D."/>
            <person name="Utterback T.R."/>
            <person name="Hanna M.C."/>
            <person name="Nguyen D.T."/>
            <person name="Saudek D.M."/>
            <person name="Brandon R.C."/>
            <person name="Fine L.D."/>
            <person name="Fritchman J.L."/>
            <person name="Fuhrmann J.L."/>
            <person name="Geoghagen N.S.M."/>
            <person name="Gnehm C.L."/>
            <person name="McDonald L.A."/>
            <person name="Small K.V."/>
            <person name="Fraser C.M."/>
            <person name="Smith H.O."/>
            <person name="Venter J.C."/>
        </authorList>
    </citation>
    <scope>NUCLEOTIDE SEQUENCE [LARGE SCALE GENOMIC DNA]</scope>
    <source>
        <strain>ATCC 51907 / DSM 11121 / KW20 / Rd</strain>
    </source>
</reference>
<proteinExistence type="predicted"/>
<organism>
    <name type="scientific">Haemophilus influenzae (strain ATCC 51907 / DSM 11121 / KW20 / Rd)</name>
    <dbReference type="NCBI Taxonomy" id="71421"/>
    <lineage>
        <taxon>Bacteria</taxon>
        <taxon>Pseudomonadati</taxon>
        <taxon>Pseudomonadota</taxon>
        <taxon>Gammaproteobacteria</taxon>
        <taxon>Pasteurellales</taxon>
        <taxon>Pasteurellaceae</taxon>
        <taxon>Haemophilus</taxon>
    </lineage>
</organism>
<feature type="chain" id="PRO_0000078089" description="Uncharacterized protein HI_1569">
    <location>
        <begin position="1"/>
        <end position="50"/>
    </location>
</feature>
<accession>P44258</accession>
<gene>
    <name type="ordered locus">HI_1569</name>
</gene>
<sequence length="50" mass="6132">MKDFADRYTFIRQGKMLVVKILPKEIFVLSFRRIKDKELKKLLEKDYALR</sequence>
<protein>
    <recommendedName>
        <fullName>Uncharacterized protein HI_1569</fullName>
    </recommendedName>
</protein>